<reference key="1">
    <citation type="journal article" date="2002" name="Nature">
        <title>The genome sequence of Schizosaccharomyces pombe.</title>
        <authorList>
            <person name="Wood V."/>
            <person name="Gwilliam R."/>
            <person name="Rajandream M.A."/>
            <person name="Lyne M.H."/>
            <person name="Lyne R."/>
            <person name="Stewart A."/>
            <person name="Sgouros J.G."/>
            <person name="Peat N."/>
            <person name="Hayles J."/>
            <person name="Baker S.G."/>
            <person name="Basham D."/>
            <person name="Bowman S."/>
            <person name="Brooks K."/>
            <person name="Brown D."/>
            <person name="Brown S."/>
            <person name="Chillingworth T."/>
            <person name="Churcher C.M."/>
            <person name="Collins M."/>
            <person name="Connor R."/>
            <person name="Cronin A."/>
            <person name="Davis P."/>
            <person name="Feltwell T."/>
            <person name="Fraser A."/>
            <person name="Gentles S."/>
            <person name="Goble A."/>
            <person name="Hamlin N."/>
            <person name="Harris D.E."/>
            <person name="Hidalgo J."/>
            <person name="Hodgson G."/>
            <person name="Holroyd S."/>
            <person name="Hornsby T."/>
            <person name="Howarth S."/>
            <person name="Huckle E.J."/>
            <person name="Hunt S."/>
            <person name="Jagels K."/>
            <person name="James K.D."/>
            <person name="Jones L."/>
            <person name="Jones M."/>
            <person name="Leather S."/>
            <person name="McDonald S."/>
            <person name="McLean J."/>
            <person name="Mooney P."/>
            <person name="Moule S."/>
            <person name="Mungall K.L."/>
            <person name="Murphy L.D."/>
            <person name="Niblett D."/>
            <person name="Odell C."/>
            <person name="Oliver K."/>
            <person name="O'Neil S."/>
            <person name="Pearson D."/>
            <person name="Quail M.A."/>
            <person name="Rabbinowitsch E."/>
            <person name="Rutherford K.M."/>
            <person name="Rutter S."/>
            <person name="Saunders D."/>
            <person name="Seeger K."/>
            <person name="Sharp S."/>
            <person name="Skelton J."/>
            <person name="Simmonds M.N."/>
            <person name="Squares R."/>
            <person name="Squares S."/>
            <person name="Stevens K."/>
            <person name="Taylor K."/>
            <person name="Taylor R.G."/>
            <person name="Tivey A."/>
            <person name="Walsh S.V."/>
            <person name="Warren T."/>
            <person name="Whitehead S."/>
            <person name="Woodward J.R."/>
            <person name="Volckaert G."/>
            <person name="Aert R."/>
            <person name="Robben J."/>
            <person name="Grymonprez B."/>
            <person name="Weltjens I."/>
            <person name="Vanstreels E."/>
            <person name="Rieger M."/>
            <person name="Schaefer M."/>
            <person name="Mueller-Auer S."/>
            <person name="Gabel C."/>
            <person name="Fuchs M."/>
            <person name="Duesterhoeft A."/>
            <person name="Fritzc C."/>
            <person name="Holzer E."/>
            <person name="Moestl D."/>
            <person name="Hilbert H."/>
            <person name="Borzym K."/>
            <person name="Langer I."/>
            <person name="Beck A."/>
            <person name="Lehrach H."/>
            <person name="Reinhardt R."/>
            <person name="Pohl T.M."/>
            <person name="Eger P."/>
            <person name="Zimmermann W."/>
            <person name="Wedler H."/>
            <person name="Wambutt R."/>
            <person name="Purnelle B."/>
            <person name="Goffeau A."/>
            <person name="Cadieu E."/>
            <person name="Dreano S."/>
            <person name="Gloux S."/>
            <person name="Lelaure V."/>
            <person name="Mottier S."/>
            <person name="Galibert F."/>
            <person name="Aves S.J."/>
            <person name="Xiang Z."/>
            <person name="Hunt C."/>
            <person name="Moore K."/>
            <person name="Hurst S.M."/>
            <person name="Lucas M."/>
            <person name="Rochet M."/>
            <person name="Gaillardin C."/>
            <person name="Tallada V.A."/>
            <person name="Garzon A."/>
            <person name="Thode G."/>
            <person name="Daga R.R."/>
            <person name="Cruzado L."/>
            <person name="Jimenez J."/>
            <person name="Sanchez M."/>
            <person name="del Rey F."/>
            <person name="Benito J."/>
            <person name="Dominguez A."/>
            <person name="Revuelta J.L."/>
            <person name="Moreno S."/>
            <person name="Armstrong J."/>
            <person name="Forsburg S.L."/>
            <person name="Cerutti L."/>
            <person name="Lowe T."/>
            <person name="McCombie W.R."/>
            <person name="Paulsen I."/>
            <person name="Potashkin J."/>
            <person name="Shpakovski G.V."/>
            <person name="Ussery D."/>
            <person name="Barrell B.G."/>
            <person name="Nurse P."/>
        </authorList>
    </citation>
    <scope>NUCLEOTIDE SEQUENCE [LARGE SCALE GENOMIC DNA]</scope>
    <source>
        <strain>972 / ATCC 24843</strain>
    </source>
</reference>
<reference key="2">
    <citation type="journal article" date="2011" name="Science">
        <title>Comparative functional genomics of the fission yeasts.</title>
        <authorList>
            <person name="Rhind N."/>
            <person name="Chen Z."/>
            <person name="Yassour M."/>
            <person name="Thompson D.A."/>
            <person name="Haas B.J."/>
            <person name="Habib N."/>
            <person name="Wapinski I."/>
            <person name="Roy S."/>
            <person name="Lin M.F."/>
            <person name="Heiman D.I."/>
            <person name="Young S.K."/>
            <person name="Furuya K."/>
            <person name="Guo Y."/>
            <person name="Pidoux A."/>
            <person name="Chen H.M."/>
            <person name="Robbertse B."/>
            <person name="Goldberg J.M."/>
            <person name="Aoki K."/>
            <person name="Bayne E.H."/>
            <person name="Berlin A.M."/>
            <person name="Desjardins C.A."/>
            <person name="Dobbs E."/>
            <person name="Dukaj L."/>
            <person name="Fan L."/>
            <person name="FitzGerald M.G."/>
            <person name="French C."/>
            <person name="Gujja S."/>
            <person name="Hansen K."/>
            <person name="Keifenheim D."/>
            <person name="Levin J.Z."/>
            <person name="Mosher R.A."/>
            <person name="Mueller C.A."/>
            <person name="Pfiffner J."/>
            <person name="Priest M."/>
            <person name="Russ C."/>
            <person name="Smialowska A."/>
            <person name="Swoboda P."/>
            <person name="Sykes S.M."/>
            <person name="Vaughn M."/>
            <person name="Vengrova S."/>
            <person name="Yoder R."/>
            <person name="Zeng Q."/>
            <person name="Allshire R."/>
            <person name="Baulcombe D."/>
            <person name="Birren B.W."/>
            <person name="Brown W."/>
            <person name="Ekwall K."/>
            <person name="Kellis M."/>
            <person name="Leatherwood J."/>
            <person name="Levin H."/>
            <person name="Margalit H."/>
            <person name="Martienssen R."/>
            <person name="Nieduszynski C.A."/>
            <person name="Spatafora J.W."/>
            <person name="Friedman N."/>
            <person name="Dalgaard J.Z."/>
            <person name="Baumann P."/>
            <person name="Niki H."/>
            <person name="Regev A."/>
            <person name="Nusbaum C."/>
        </authorList>
    </citation>
    <scope>REVISION OF GENE MODEL</scope>
</reference>
<reference key="3">
    <citation type="journal article" date="2011" name="Genetics">
        <title>Augmented annotation of the Schizosaccharomyces pombe genome reveals additional genes required for growth and viability.</title>
        <authorList>
            <person name="Bitton D.A."/>
            <person name="Wood V."/>
            <person name="Scutt P.J."/>
            <person name="Grallert A."/>
            <person name="Yates T."/>
            <person name="Smith D.L."/>
            <person name="Hagan I.M."/>
            <person name="Miller C.J."/>
        </authorList>
    </citation>
    <scope>REVISION OF GENE MODEL</scope>
</reference>
<reference key="4">
    <citation type="journal article" date="2006" name="Nat. Biotechnol.">
        <title>ORFeome cloning and global analysis of protein localization in the fission yeast Schizosaccharomyces pombe.</title>
        <authorList>
            <person name="Matsuyama A."/>
            <person name="Arai R."/>
            <person name="Yashiroda Y."/>
            <person name="Shirai A."/>
            <person name="Kamata A."/>
            <person name="Sekido S."/>
            <person name="Kobayashi Y."/>
            <person name="Hashimoto A."/>
            <person name="Hamamoto M."/>
            <person name="Hiraoka Y."/>
            <person name="Horinouchi S."/>
            <person name="Yoshida M."/>
        </authorList>
    </citation>
    <scope>SUBCELLULAR LOCATION [LARGE SCALE ANALYSIS]</scope>
</reference>
<evidence type="ECO:0000250" key="1"/>
<evidence type="ECO:0000255" key="2">
    <source>
        <dbReference type="PROSITE-ProRule" id="PRU01182"/>
    </source>
</evidence>
<evidence type="ECO:0000256" key="3">
    <source>
        <dbReference type="SAM" id="MobiDB-lite"/>
    </source>
</evidence>
<evidence type="ECO:0000305" key="4"/>
<accession>Q9P780</accession>
<proteinExistence type="inferred from homology"/>
<name>NPL4_SCHPO</name>
<dbReference type="EMBL" id="CU329671">
    <property type="protein sequence ID" value="CAB88240.2"/>
    <property type="molecule type" value="Genomic_DNA"/>
</dbReference>
<dbReference type="RefSeq" id="NP_595883.2">
    <property type="nucleotide sequence ID" value="NM_001021789.2"/>
</dbReference>
<dbReference type="SMR" id="Q9P780"/>
<dbReference type="BioGRID" id="276371">
    <property type="interactions" value="4"/>
</dbReference>
<dbReference type="FunCoup" id="Q9P780">
    <property type="interactions" value="895"/>
</dbReference>
<dbReference type="STRING" id="284812.Q9P780"/>
<dbReference type="iPTMnet" id="Q9P780"/>
<dbReference type="PaxDb" id="4896-SPBC1711.10c.1"/>
<dbReference type="EnsemblFungi" id="SPBC1711.10c.1">
    <property type="protein sequence ID" value="SPBC1711.10c.1:pep"/>
    <property type="gene ID" value="SPBC1711.10c"/>
</dbReference>
<dbReference type="GeneID" id="2539821"/>
<dbReference type="KEGG" id="spo:2539821"/>
<dbReference type="PomBase" id="SPBC1711.10c">
    <property type="gene designation" value="npl4"/>
</dbReference>
<dbReference type="VEuPathDB" id="FungiDB:SPBC1711.10c"/>
<dbReference type="eggNOG" id="KOG2834">
    <property type="taxonomic scope" value="Eukaryota"/>
</dbReference>
<dbReference type="HOGENOM" id="CLU_017172_0_0_1"/>
<dbReference type="InParanoid" id="Q9P780"/>
<dbReference type="OMA" id="KWSRTGR"/>
<dbReference type="Reactome" id="R-SPO-110320">
    <property type="pathway name" value="Translesion Synthesis by POLH"/>
</dbReference>
<dbReference type="Reactome" id="R-SPO-8951664">
    <property type="pathway name" value="Neddylation"/>
</dbReference>
<dbReference type="Reactome" id="R-SPO-9755511">
    <property type="pathway name" value="KEAP1-NFE2L2 pathway"/>
</dbReference>
<dbReference type="PRO" id="PR:Q9P780"/>
<dbReference type="Proteomes" id="UP000002485">
    <property type="component" value="Chromosome II"/>
</dbReference>
<dbReference type="GO" id="GO:0036266">
    <property type="term" value="C:Cdc48p-Npl4p-Vms1p AAA ATPase complex"/>
    <property type="evidence" value="ECO:0000266"/>
    <property type="project" value="PomBase"/>
</dbReference>
<dbReference type="GO" id="GO:0032473">
    <property type="term" value="C:cytoplasmic side of mitochondrial outer membrane"/>
    <property type="evidence" value="ECO:0000305"/>
    <property type="project" value="PomBase"/>
</dbReference>
<dbReference type="GO" id="GO:0005829">
    <property type="term" value="C:cytosol"/>
    <property type="evidence" value="ECO:0007005"/>
    <property type="project" value="PomBase"/>
</dbReference>
<dbReference type="GO" id="GO:0000836">
    <property type="term" value="C:Hrd1p ubiquitin ligase complex"/>
    <property type="evidence" value="ECO:0000266"/>
    <property type="project" value="PomBase"/>
</dbReference>
<dbReference type="GO" id="GO:0031965">
    <property type="term" value="C:nuclear membrane"/>
    <property type="evidence" value="ECO:0007669"/>
    <property type="project" value="UniProtKB-SubCell"/>
</dbReference>
<dbReference type="GO" id="GO:0005634">
    <property type="term" value="C:nucleus"/>
    <property type="evidence" value="ECO:0007005"/>
    <property type="project" value="PomBase"/>
</dbReference>
<dbReference type="GO" id="GO:0048471">
    <property type="term" value="C:perinuclear region of cytoplasm"/>
    <property type="evidence" value="ECO:0007669"/>
    <property type="project" value="UniProtKB-SubCell"/>
</dbReference>
<dbReference type="GO" id="GO:1990112">
    <property type="term" value="C:RQC complex"/>
    <property type="evidence" value="ECO:0000266"/>
    <property type="project" value="PomBase"/>
</dbReference>
<dbReference type="GO" id="GO:0043130">
    <property type="term" value="F:ubiquitin binding"/>
    <property type="evidence" value="ECO:0000318"/>
    <property type="project" value="GO_Central"/>
</dbReference>
<dbReference type="GO" id="GO:0031625">
    <property type="term" value="F:ubiquitin protein ligase binding"/>
    <property type="evidence" value="ECO:0000318"/>
    <property type="project" value="GO_Central"/>
</dbReference>
<dbReference type="GO" id="GO:0036503">
    <property type="term" value="P:ERAD pathway"/>
    <property type="evidence" value="ECO:0000266"/>
    <property type="project" value="PomBase"/>
</dbReference>
<dbReference type="GO" id="GO:0051028">
    <property type="term" value="P:mRNA transport"/>
    <property type="evidence" value="ECO:0007669"/>
    <property type="project" value="UniProtKB-KW"/>
</dbReference>
<dbReference type="GO" id="GO:0015031">
    <property type="term" value="P:protein transport"/>
    <property type="evidence" value="ECO:0007669"/>
    <property type="project" value="UniProtKB-KW"/>
</dbReference>
<dbReference type="GO" id="GO:1990116">
    <property type="term" value="P:ribosome-associated ubiquitin-dependent protein catabolic process"/>
    <property type="evidence" value="ECO:0000266"/>
    <property type="project" value="PomBase"/>
</dbReference>
<dbReference type="GO" id="GO:0006511">
    <property type="term" value="P:ubiquitin-dependent protein catabolic process"/>
    <property type="evidence" value="ECO:0000318"/>
    <property type="project" value="GO_Central"/>
</dbReference>
<dbReference type="CDD" id="cd08061">
    <property type="entry name" value="MPN_NPL4"/>
    <property type="match status" value="1"/>
</dbReference>
<dbReference type="FunFam" id="3.10.20.90:FF:000243">
    <property type="entry name" value="Nuclear protein localization protein 4"/>
    <property type="match status" value="1"/>
</dbReference>
<dbReference type="Gene3D" id="3.10.20.90">
    <property type="entry name" value="Phosphatidylinositol 3-kinase Catalytic Subunit, Chain A, domain 1"/>
    <property type="match status" value="1"/>
</dbReference>
<dbReference type="InterPro" id="IPR037518">
    <property type="entry name" value="MPN"/>
</dbReference>
<dbReference type="InterPro" id="IPR016563">
    <property type="entry name" value="Npl4"/>
</dbReference>
<dbReference type="InterPro" id="IPR007717">
    <property type="entry name" value="NPL4_C"/>
</dbReference>
<dbReference type="InterPro" id="IPR024682">
    <property type="entry name" value="Npl4_Ub-like_dom"/>
</dbReference>
<dbReference type="InterPro" id="IPR007716">
    <property type="entry name" value="NPL4_Zn-bd_put"/>
</dbReference>
<dbReference type="InterPro" id="IPR029071">
    <property type="entry name" value="Ubiquitin-like_domsf"/>
</dbReference>
<dbReference type="PANTHER" id="PTHR12710">
    <property type="entry name" value="NUCLEAR PROTEIN LOCALIZATION 4"/>
    <property type="match status" value="1"/>
</dbReference>
<dbReference type="PANTHER" id="PTHR12710:SF0">
    <property type="entry name" value="NUCLEAR PROTEIN LOCALIZATION PROTEIN 4 HOMOLOG"/>
    <property type="match status" value="1"/>
</dbReference>
<dbReference type="Pfam" id="PF05021">
    <property type="entry name" value="NPL4"/>
    <property type="match status" value="1"/>
</dbReference>
<dbReference type="Pfam" id="PF11543">
    <property type="entry name" value="UN_NPL4"/>
    <property type="match status" value="1"/>
</dbReference>
<dbReference type="Pfam" id="PF05020">
    <property type="entry name" value="zf-NPL4"/>
    <property type="match status" value="1"/>
</dbReference>
<dbReference type="PIRSF" id="PIRSF010052">
    <property type="entry name" value="Polyub_prc_Npl4"/>
    <property type="match status" value="1"/>
</dbReference>
<dbReference type="SUPFAM" id="SSF54236">
    <property type="entry name" value="Ubiquitin-like"/>
    <property type="match status" value="1"/>
</dbReference>
<dbReference type="PROSITE" id="PS50249">
    <property type="entry name" value="MPN"/>
    <property type="match status" value="1"/>
</dbReference>
<feature type="chain" id="PRO_0000339454" description="Nuclear protein localization protein 4">
    <location>
        <begin position="1"/>
        <end position="572"/>
    </location>
</feature>
<feature type="domain" description="MPN" evidence="2">
    <location>
        <begin position="242"/>
        <end position="379"/>
    </location>
</feature>
<feature type="region of interest" description="Disordered" evidence="3">
    <location>
        <begin position="87"/>
        <end position="116"/>
    </location>
</feature>
<sequence>MILRFRSKRGMARAEFQPTDTLAMLSAKILSDILKNDYSPENVSLCQNESDQGVIFSNLNDQTLQDAGLTHGQMLYLRLGTPNSDIASSNNEPALTVTGAPKQVSTPDVSEKKPSMPVIQDPIDDSLEKEDGLIRRSMTSLCRHGPKGMCDYCSPLEPYDESYRQENKIKHLSFHAYLRKINSNVNKYASSQSFIPPLEEPSFTVKEKCPSGHPPWPAGICTKCQPSTVMLNLQPFRVIDHIEFASPGIVDSFLNKWRQSGFQRIGYTYGHFEQYNNVPLGIKGVIEAIYEPPQVSEADGVTLEEWADEALVEQVATACGLRRIGIIFTDLTDDGSNSGKVLCKRHSDSYFLSSLEVYNSANFQTKFKNPCKWSRSGYFGSKFVTSVISGNLNGEIEVMSYQVSNIGTALYQADLIQPSVDPDRMLVKKEDQTRYVPDVLYRYTDKYGKQVSENAKPAFPVSFLLVTLTDGFPEKPDPLFSNNDTSIITTLESTDETGRLRQLAKLFDHNAIANGSLSNFSVLLAIAKLSILGKDDLAALASYATAPTEENEKNLNSRESYQTLLAILYSSL</sequence>
<comment type="function">
    <text evidence="1">Involved in the import of nuclear-targeted proteins into the nucleus and the export of poly(A) RNA out of the nucleus. Has a role in the endoplasmic reticulum-associated degradation (ERAD) pathway (By similarity).</text>
</comment>
<comment type="subcellular location">
    <subcellularLocation>
        <location evidence="1">Cytoplasm</location>
        <location evidence="1">Perinuclear region</location>
    </subcellularLocation>
    <subcellularLocation>
        <location evidence="1">Endoplasmic reticulum membrane</location>
        <topology evidence="1">Peripheral membrane protein</topology>
        <orientation evidence="1">Cytoplasmic side</orientation>
    </subcellularLocation>
    <subcellularLocation>
        <location evidence="1">Nucleus membrane</location>
        <topology evidence="1">Peripheral membrane protein</topology>
        <orientation evidence="1">Cytoplasmic side</orientation>
    </subcellularLocation>
    <text evidence="1">Localizes mainly at the nuclear periphery and the endoplasmic reticulum membrane.</text>
</comment>
<comment type="similarity">
    <text evidence="4">Belongs to the NPL4 family.</text>
</comment>
<keyword id="KW-0963">Cytoplasm</keyword>
<keyword id="KW-0256">Endoplasmic reticulum</keyword>
<keyword id="KW-0472">Membrane</keyword>
<keyword id="KW-0509">mRNA transport</keyword>
<keyword id="KW-0539">Nucleus</keyword>
<keyword id="KW-0653">Protein transport</keyword>
<keyword id="KW-1185">Reference proteome</keyword>
<keyword id="KW-0811">Translocation</keyword>
<keyword id="KW-0813">Transport</keyword>
<protein>
    <recommendedName>
        <fullName>Nuclear protein localization protein 4</fullName>
    </recommendedName>
</protein>
<organism>
    <name type="scientific">Schizosaccharomyces pombe (strain 972 / ATCC 24843)</name>
    <name type="common">Fission yeast</name>
    <dbReference type="NCBI Taxonomy" id="284812"/>
    <lineage>
        <taxon>Eukaryota</taxon>
        <taxon>Fungi</taxon>
        <taxon>Dikarya</taxon>
        <taxon>Ascomycota</taxon>
        <taxon>Taphrinomycotina</taxon>
        <taxon>Schizosaccharomycetes</taxon>
        <taxon>Schizosaccharomycetales</taxon>
        <taxon>Schizosaccharomycetaceae</taxon>
        <taxon>Schizosaccharomyces</taxon>
    </lineage>
</organism>
<gene>
    <name type="primary">npl4</name>
    <name type="ORF">SPBC1711.10c</name>
</gene>